<sequence length="127" mass="14283">MFNKSALIGSLLRRSFGTTNPLRQAIKNHQPNEMEKRFLVWSGKYKSQAEVPAFVSQDEMERVRNKMRIRLANIMIALTVIGCGIMVYSGKQAAKRGESVSKMNLEWHKQFNELKPEGGAAAPASTK</sequence>
<evidence type="ECO:0000255" key="1"/>
<evidence type="ECO:0000305" key="2"/>
<proteinExistence type="inferred from homology"/>
<feature type="chain" id="PRO_0000254642" description="UPF0389 protein GA21628">
    <location>
        <begin position="1"/>
        <end position="127"/>
    </location>
</feature>
<feature type="transmembrane region" description="Helical" evidence="1">
    <location>
        <begin position="69"/>
        <end position="88"/>
    </location>
</feature>
<gene>
    <name type="ORF">GA21628</name>
</gene>
<protein>
    <recommendedName>
        <fullName>UPF0389 protein GA21628</fullName>
    </recommendedName>
</protein>
<name>U389_DROPS</name>
<comment type="subcellular location">
    <subcellularLocation>
        <location evidence="2">Membrane</location>
        <topology evidence="2">Single-pass membrane protein</topology>
    </subcellularLocation>
</comment>
<comment type="similarity">
    <text evidence="2">Belongs to the UPF0389 family.</text>
</comment>
<organism>
    <name type="scientific">Drosophila pseudoobscura pseudoobscura</name>
    <name type="common">Fruit fly</name>
    <dbReference type="NCBI Taxonomy" id="46245"/>
    <lineage>
        <taxon>Eukaryota</taxon>
        <taxon>Metazoa</taxon>
        <taxon>Ecdysozoa</taxon>
        <taxon>Arthropoda</taxon>
        <taxon>Hexapoda</taxon>
        <taxon>Insecta</taxon>
        <taxon>Pterygota</taxon>
        <taxon>Neoptera</taxon>
        <taxon>Endopterygota</taxon>
        <taxon>Diptera</taxon>
        <taxon>Brachycera</taxon>
        <taxon>Muscomorpha</taxon>
        <taxon>Ephydroidea</taxon>
        <taxon>Drosophilidae</taxon>
        <taxon>Drosophila</taxon>
        <taxon>Sophophora</taxon>
    </lineage>
</organism>
<keyword id="KW-0472">Membrane</keyword>
<keyword id="KW-1185">Reference proteome</keyword>
<keyword id="KW-0812">Transmembrane</keyword>
<keyword id="KW-1133">Transmembrane helix</keyword>
<dbReference type="EMBL" id="CH379070">
    <property type="protein sequence ID" value="EAL30454.2"/>
    <property type="molecule type" value="Genomic_DNA"/>
</dbReference>
<dbReference type="SMR" id="Q29DG0"/>
<dbReference type="FunCoup" id="Q29DG0">
    <property type="interactions" value="858"/>
</dbReference>
<dbReference type="STRING" id="46245.Q29DG0"/>
<dbReference type="EnsemblMetazoa" id="FBtr0287644">
    <property type="protein sequence ID" value="FBpp0286082"/>
    <property type="gene ID" value="FBgn0081613"/>
</dbReference>
<dbReference type="KEGG" id="dpo:4812245"/>
<dbReference type="eggNOG" id="ENOG502S8IU">
    <property type="taxonomic scope" value="Eukaryota"/>
</dbReference>
<dbReference type="HOGENOM" id="CLU_122911_3_0_1"/>
<dbReference type="InParanoid" id="Q29DG0"/>
<dbReference type="OMA" id="WHKQFNE"/>
<dbReference type="Proteomes" id="UP000001819">
    <property type="component" value="Chromosome X"/>
</dbReference>
<dbReference type="Bgee" id="FBgn0081613">
    <property type="expression patterns" value="Expressed in insect adult head and 2 other cell types or tissues"/>
</dbReference>
<dbReference type="GO" id="GO:0016020">
    <property type="term" value="C:membrane"/>
    <property type="evidence" value="ECO:0007669"/>
    <property type="project" value="UniProtKB-SubCell"/>
</dbReference>
<dbReference type="InterPro" id="IPR009432">
    <property type="entry name" value="DUF1075"/>
</dbReference>
<dbReference type="PANTHER" id="PTHR13674">
    <property type="entry name" value="GROWTH AND TRANSFORMATION-DEPENDENT PROTEIN"/>
    <property type="match status" value="1"/>
</dbReference>
<dbReference type="PANTHER" id="PTHR13674:SF5">
    <property type="entry name" value="UPF0389 PROTEIN CG9231"/>
    <property type="match status" value="1"/>
</dbReference>
<dbReference type="Pfam" id="PF06388">
    <property type="entry name" value="DUF1075"/>
    <property type="match status" value="1"/>
</dbReference>
<accession>Q29DG0</accession>
<reference key="1">
    <citation type="journal article" date="2005" name="Genome Res.">
        <title>Comparative genome sequencing of Drosophila pseudoobscura: chromosomal, gene, and cis-element evolution.</title>
        <authorList>
            <person name="Richards S."/>
            <person name="Liu Y."/>
            <person name="Bettencourt B.R."/>
            <person name="Hradecky P."/>
            <person name="Letovsky S."/>
            <person name="Nielsen R."/>
            <person name="Thornton K."/>
            <person name="Hubisz M.J."/>
            <person name="Chen R."/>
            <person name="Meisel R.P."/>
            <person name="Couronne O."/>
            <person name="Hua S."/>
            <person name="Smith M.A."/>
            <person name="Zhang P."/>
            <person name="Liu J."/>
            <person name="Bussemaker H.J."/>
            <person name="van Batenburg M.F."/>
            <person name="Howells S.L."/>
            <person name="Scherer S.E."/>
            <person name="Sodergren E."/>
            <person name="Matthews B.B."/>
            <person name="Crosby M.A."/>
            <person name="Schroeder A.J."/>
            <person name="Ortiz-Barrientos D."/>
            <person name="Rives C.M."/>
            <person name="Metzker M.L."/>
            <person name="Muzny D.M."/>
            <person name="Scott G."/>
            <person name="Steffen D."/>
            <person name="Wheeler D.A."/>
            <person name="Worley K.C."/>
            <person name="Havlak P."/>
            <person name="Durbin K.J."/>
            <person name="Egan A."/>
            <person name="Gill R."/>
            <person name="Hume J."/>
            <person name="Morgan M.B."/>
            <person name="Miner G."/>
            <person name="Hamilton C."/>
            <person name="Huang Y."/>
            <person name="Waldron L."/>
            <person name="Verduzco D."/>
            <person name="Clerc-Blankenburg K.P."/>
            <person name="Dubchak I."/>
            <person name="Noor M.A.F."/>
            <person name="Anderson W."/>
            <person name="White K.P."/>
            <person name="Clark A.G."/>
            <person name="Schaeffer S.W."/>
            <person name="Gelbart W.M."/>
            <person name="Weinstock G.M."/>
            <person name="Gibbs R.A."/>
        </authorList>
    </citation>
    <scope>NUCLEOTIDE SEQUENCE [LARGE SCALE GENOMIC DNA]</scope>
    <source>
        <strain>MV2-25 / Tucson 14011-0121.94</strain>
    </source>
</reference>